<feature type="chain" id="PRO_0000317588" description="Mitochondrial S-adenosylmethionine carrier protein">
    <location>
        <begin position="1"/>
        <end position="274"/>
    </location>
</feature>
<feature type="transmembrane region" description="Helical; Name=1" evidence="2">
    <location>
        <begin position="5"/>
        <end position="25"/>
    </location>
</feature>
<feature type="transmembrane region" description="Helical; Name=2" evidence="2">
    <location>
        <begin position="49"/>
        <end position="69"/>
    </location>
</feature>
<feature type="transmembrane region" description="Helical; Name=3" evidence="2">
    <location>
        <begin position="85"/>
        <end position="105"/>
    </location>
</feature>
<feature type="transmembrane region" description="Helical; Name=4" evidence="2">
    <location>
        <begin position="142"/>
        <end position="162"/>
    </location>
</feature>
<feature type="transmembrane region" description="Helical; Name=5" evidence="2">
    <location>
        <begin position="182"/>
        <end position="202"/>
    </location>
</feature>
<feature type="transmembrane region" description="Helical; Name=6" evidence="2">
    <location>
        <begin position="238"/>
        <end position="258"/>
    </location>
</feature>
<feature type="repeat" description="Solcar 1">
    <location>
        <begin position="4"/>
        <end position="77"/>
    </location>
</feature>
<feature type="repeat" description="Solcar 2">
    <location>
        <begin position="86"/>
        <end position="168"/>
    </location>
</feature>
<feature type="repeat" description="Solcar 3">
    <location>
        <begin position="177"/>
        <end position="265"/>
    </location>
</feature>
<feature type="sequence conflict" description="In Ref. 1; AAH19156." evidence="3" ref="1">
    <original>A</original>
    <variation>T</variation>
    <location>
        <position position="262"/>
    </location>
</feature>
<proteinExistence type="evidence at protein level"/>
<reference key="1">
    <citation type="journal article" date="2004" name="Genome Res.">
        <title>The status, quality, and expansion of the NIH full-length cDNA project: the Mammalian Gene Collection (MGC).</title>
        <authorList>
            <consortium name="The MGC Project Team"/>
        </authorList>
    </citation>
    <scope>NUCLEOTIDE SEQUENCE [LARGE SCALE MRNA]</scope>
    <source>
        <strain>Czech II</strain>
        <strain>FVB/N</strain>
        <strain>FVB/N-3</strain>
        <tissue>Mammary tumor</tissue>
    </source>
</reference>
<reference key="2">
    <citation type="journal article" date="2010" name="Cell">
        <title>A tissue-specific atlas of mouse protein phosphorylation and expression.</title>
        <authorList>
            <person name="Huttlin E.L."/>
            <person name="Jedrychowski M.P."/>
            <person name="Elias J.E."/>
            <person name="Goswami T."/>
            <person name="Rad R."/>
            <person name="Beausoleil S.A."/>
            <person name="Villen J."/>
            <person name="Haas W."/>
            <person name="Sowa M.E."/>
            <person name="Gygi S.P."/>
        </authorList>
    </citation>
    <scope>IDENTIFICATION BY MASS SPECTROMETRY [LARGE SCALE ANALYSIS]</scope>
    <source>
        <tissue>Brown adipose tissue</tissue>
    </source>
</reference>
<organism>
    <name type="scientific">Mus musculus</name>
    <name type="common">Mouse</name>
    <dbReference type="NCBI Taxonomy" id="10090"/>
    <lineage>
        <taxon>Eukaryota</taxon>
        <taxon>Metazoa</taxon>
        <taxon>Chordata</taxon>
        <taxon>Craniata</taxon>
        <taxon>Vertebrata</taxon>
        <taxon>Euteleostomi</taxon>
        <taxon>Mammalia</taxon>
        <taxon>Eutheria</taxon>
        <taxon>Euarchontoglires</taxon>
        <taxon>Glires</taxon>
        <taxon>Rodentia</taxon>
        <taxon>Myomorpha</taxon>
        <taxon>Muroidea</taxon>
        <taxon>Muridae</taxon>
        <taxon>Murinae</taxon>
        <taxon>Mus</taxon>
        <taxon>Mus</taxon>
    </lineage>
</organism>
<comment type="function">
    <text evidence="1">Mitochondrial S-adenosyl-L-methionine/S-adenosyl-L-homocysteine antiporter. Mediates the exchange of cytosolic S-adenosyl-L-methionine, the predominant methyl-group donor for macromolecule methylation processes, for mitochondrial S-adenosylhomocysteine(SAH), a by-product of methylation reactions.</text>
</comment>
<comment type="catalytic activity">
    <reaction evidence="1">
        <text>S-adenosyl-L-homocysteine(out) + S-adenosyl-L-methionine(in) = S-adenosyl-L-homocysteine(in) + S-adenosyl-L-methionine(out)</text>
        <dbReference type="Rhea" id="RHEA:75479"/>
        <dbReference type="ChEBI" id="CHEBI:57856"/>
        <dbReference type="ChEBI" id="CHEBI:59789"/>
    </reaction>
</comment>
<comment type="subcellular location">
    <subcellularLocation>
        <location evidence="1">Mitochondrion inner membrane</location>
        <topology evidence="2">Multi-pass membrane protein</topology>
    </subcellularLocation>
</comment>
<comment type="similarity">
    <text evidence="3">Belongs to the mitochondrial carrier (TC 2.A.29) family.</text>
</comment>
<name>SAMC_MOUSE</name>
<accession>Q5U680</accession>
<accession>Q8JZT2</accession>
<protein>
    <recommendedName>
        <fullName evidence="1">Mitochondrial S-adenosylmethionine carrier protein</fullName>
        <shortName evidence="1">SAM carrier</shortName>
    </recommendedName>
    <alternativeName>
        <fullName evidence="4">Solute carrier family 25 member 26</fullName>
    </alternativeName>
</protein>
<keyword id="KW-0050">Antiport</keyword>
<keyword id="KW-0472">Membrane</keyword>
<keyword id="KW-0496">Mitochondrion</keyword>
<keyword id="KW-0999">Mitochondrion inner membrane</keyword>
<keyword id="KW-1185">Reference proteome</keyword>
<keyword id="KW-0677">Repeat</keyword>
<keyword id="KW-0949">S-adenosyl-L-methionine</keyword>
<keyword id="KW-0812">Transmembrane</keyword>
<keyword id="KW-1133">Transmembrane helix</keyword>
<keyword id="KW-0813">Transport</keyword>
<dbReference type="EMBL" id="BC019156">
    <property type="protein sequence ID" value="AAH19156.1"/>
    <property type="molecule type" value="mRNA"/>
</dbReference>
<dbReference type="EMBL" id="BC019170">
    <property type="protein sequence ID" value="AAH19170.1"/>
    <property type="molecule type" value="mRNA"/>
</dbReference>
<dbReference type="EMBL" id="BC037142">
    <property type="protein sequence ID" value="AAH37142.1"/>
    <property type="molecule type" value="mRNA"/>
</dbReference>
<dbReference type="CCDS" id="CCDS20379.1"/>
<dbReference type="RefSeq" id="NP_080531.2">
    <property type="nucleotide sequence ID" value="NM_026255.5"/>
</dbReference>
<dbReference type="SMR" id="Q5U680"/>
<dbReference type="BioGRID" id="212291">
    <property type="interactions" value="1"/>
</dbReference>
<dbReference type="FunCoup" id="Q5U680">
    <property type="interactions" value="2320"/>
</dbReference>
<dbReference type="STRING" id="10090.ENSMUSP00000058028"/>
<dbReference type="GlyGen" id="Q5U680">
    <property type="glycosylation" value="1 site, 1 O-linked glycan (1 site)"/>
</dbReference>
<dbReference type="PhosphoSitePlus" id="Q5U680"/>
<dbReference type="PaxDb" id="10090-ENSMUSP00000058028"/>
<dbReference type="PeptideAtlas" id="Q5U680"/>
<dbReference type="ProteomicsDB" id="256697"/>
<dbReference type="Pumba" id="Q5U680"/>
<dbReference type="Antibodypedia" id="15419">
    <property type="antibodies" value="102 antibodies from 19 providers"/>
</dbReference>
<dbReference type="DNASU" id="67582"/>
<dbReference type="Ensembl" id="ENSMUST00000061118.11">
    <property type="protein sequence ID" value="ENSMUSP00000058028.9"/>
    <property type="gene ID" value="ENSMUSG00000045100.12"/>
</dbReference>
<dbReference type="GeneID" id="67582"/>
<dbReference type="KEGG" id="mmu:67582"/>
<dbReference type="UCSC" id="uc009czr.2">
    <property type="organism name" value="mouse"/>
</dbReference>
<dbReference type="AGR" id="MGI:1914832"/>
<dbReference type="CTD" id="115286"/>
<dbReference type="MGI" id="MGI:1914832">
    <property type="gene designation" value="Slc25a26"/>
</dbReference>
<dbReference type="VEuPathDB" id="HostDB:ENSMUSG00000045100"/>
<dbReference type="eggNOG" id="KOG0768">
    <property type="taxonomic scope" value="Eukaryota"/>
</dbReference>
<dbReference type="GeneTree" id="ENSGT00550000074950"/>
<dbReference type="HOGENOM" id="CLU_015166_3_0_1"/>
<dbReference type="InParanoid" id="Q5U680"/>
<dbReference type="OMA" id="IGPRTMW"/>
<dbReference type="OrthoDB" id="276989at2759"/>
<dbReference type="PhylomeDB" id="Q5U680"/>
<dbReference type="TreeFam" id="TF313186"/>
<dbReference type="Reactome" id="R-MMU-425393">
    <property type="pathway name" value="Transport of inorganic cations/anions and amino acids/oligopeptides"/>
</dbReference>
<dbReference type="BioGRID-ORCS" id="67582">
    <property type="hits" value="20 hits in 77 CRISPR screens"/>
</dbReference>
<dbReference type="ChiTaRS" id="Slc25a26">
    <property type="organism name" value="mouse"/>
</dbReference>
<dbReference type="PRO" id="PR:Q5U680"/>
<dbReference type="Proteomes" id="UP000000589">
    <property type="component" value="Chromosome 6"/>
</dbReference>
<dbReference type="RNAct" id="Q5U680">
    <property type="molecule type" value="protein"/>
</dbReference>
<dbReference type="Bgee" id="ENSMUSG00000045100">
    <property type="expression patterns" value="Expressed in interventricular septum and 224 other cell types or tissues"/>
</dbReference>
<dbReference type="ExpressionAtlas" id="Q5U680">
    <property type="expression patterns" value="baseline and differential"/>
</dbReference>
<dbReference type="GO" id="GO:0005743">
    <property type="term" value="C:mitochondrial inner membrane"/>
    <property type="evidence" value="ECO:0000250"/>
    <property type="project" value="UniProtKB"/>
</dbReference>
<dbReference type="GO" id="GO:0005739">
    <property type="term" value="C:mitochondrion"/>
    <property type="evidence" value="ECO:0007005"/>
    <property type="project" value="MGI"/>
</dbReference>
<dbReference type="GO" id="GO:0000095">
    <property type="term" value="F:S-adenosyl-L-methionine transmembrane transporter activity"/>
    <property type="evidence" value="ECO:0000250"/>
    <property type="project" value="UniProtKB"/>
</dbReference>
<dbReference type="GO" id="GO:0180003">
    <property type="term" value="F:S-adenosyl-L-methionine:S-adenosyl-L-homocysteine antiporter activity"/>
    <property type="evidence" value="ECO:0000250"/>
    <property type="project" value="UniProtKB"/>
</dbReference>
<dbReference type="GO" id="GO:1990543">
    <property type="term" value="P:mitochondrial S-adenosyl-L-methionine transmembrane transport"/>
    <property type="evidence" value="ECO:0000250"/>
    <property type="project" value="UniProtKB"/>
</dbReference>
<dbReference type="GO" id="GO:0015805">
    <property type="term" value="P:S-adenosyl-L-methionine transport"/>
    <property type="evidence" value="ECO:0000250"/>
    <property type="project" value="UniProtKB"/>
</dbReference>
<dbReference type="FunFam" id="1.50.40.10:FF:000018">
    <property type="entry name" value="S-adenosylmethionine mitochondrial carrier protein-like"/>
    <property type="match status" value="1"/>
</dbReference>
<dbReference type="Gene3D" id="1.50.40.10">
    <property type="entry name" value="Mitochondrial carrier domain"/>
    <property type="match status" value="1"/>
</dbReference>
<dbReference type="InterPro" id="IPR002067">
    <property type="entry name" value="Mit_carrier"/>
</dbReference>
<dbReference type="InterPro" id="IPR018108">
    <property type="entry name" value="Mitochondrial_sb/sol_carrier"/>
</dbReference>
<dbReference type="InterPro" id="IPR023395">
    <property type="entry name" value="Mt_carrier_dom_sf"/>
</dbReference>
<dbReference type="PANTHER" id="PTHR45667">
    <property type="entry name" value="S-ADENOSYLMETHIONINE MITOCHONDRIAL CARRIER PROTEIN"/>
    <property type="match status" value="1"/>
</dbReference>
<dbReference type="Pfam" id="PF00153">
    <property type="entry name" value="Mito_carr"/>
    <property type="match status" value="3"/>
</dbReference>
<dbReference type="PRINTS" id="PR00926">
    <property type="entry name" value="MITOCARRIER"/>
</dbReference>
<dbReference type="SUPFAM" id="SSF103506">
    <property type="entry name" value="Mitochondrial carrier"/>
    <property type="match status" value="1"/>
</dbReference>
<dbReference type="PROSITE" id="PS50920">
    <property type="entry name" value="SOLCAR"/>
    <property type="match status" value="3"/>
</dbReference>
<evidence type="ECO:0000250" key="1">
    <source>
        <dbReference type="UniProtKB" id="Q70HW3"/>
    </source>
</evidence>
<evidence type="ECO:0000255" key="2"/>
<evidence type="ECO:0000305" key="3"/>
<evidence type="ECO:0000312" key="4">
    <source>
        <dbReference type="MGI" id="MGI:1914832"/>
    </source>
</evidence>
<gene>
    <name evidence="4" type="primary">Slc25a26</name>
    <name evidence="1" type="synonym">Samc</name>
</gene>
<sequence>MDAPGFTASLVAGGVAGVSVDLILFPLDTIKTRLQSPQGFNKAGGFRGIYAGVPSAAVGSFPNAAAFFLTYEYVKSLLHTDSTSHFKPVKHMLAASTGEVVACLIRVPSEVVKQRAQVSASSKTLQIFLTILSEEGIQGLYRGYKSTVLREIPFSLVQFPLWESLKALWAWRRGHVVDSWQSAVCGAFAGGFAAAVTTPLDVAKTRIMLAKAGSSTAVGNVLSAMHGVWRSQGLAGLFAGVLPRMAAISMGGFIFLGAYDQARSLLLEVGRKSP</sequence>